<reference key="1">
    <citation type="submission" date="1994-03" db="EMBL/GenBank/DDBJ databases">
        <authorList>
            <person name="Smith D.R."/>
            <person name="Robison K."/>
        </authorList>
    </citation>
    <scope>NUCLEOTIDE SEQUENCE [GENOMIC DNA]</scope>
</reference>
<reference key="2">
    <citation type="journal article" date="2001" name="Nature">
        <title>Massive gene decay in the leprosy bacillus.</title>
        <authorList>
            <person name="Cole S.T."/>
            <person name="Eiglmeier K."/>
            <person name="Parkhill J."/>
            <person name="James K.D."/>
            <person name="Thomson N.R."/>
            <person name="Wheeler P.R."/>
            <person name="Honore N."/>
            <person name="Garnier T."/>
            <person name="Churcher C.M."/>
            <person name="Harris D.E."/>
            <person name="Mungall K.L."/>
            <person name="Basham D."/>
            <person name="Brown D."/>
            <person name="Chillingworth T."/>
            <person name="Connor R."/>
            <person name="Davies R.M."/>
            <person name="Devlin K."/>
            <person name="Duthoy S."/>
            <person name="Feltwell T."/>
            <person name="Fraser A."/>
            <person name="Hamlin N."/>
            <person name="Holroyd S."/>
            <person name="Hornsby T."/>
            <person name="Jagels K."/>
            <person name="Lacroix C."/>
            <person name="Maclean J."/>
            <person name="Moule S."/>
            <person name="Murphy L.D."/>
            <person name="Oliver K."/>
            <person name="Quail M.A."/>
            <person name="Rajandream M.A."/>
            <person name="Rutherford K.M."/>
            <person name="Rutter S."/>
            <person name="Seeger K."/>
            <person name="Simon S."/>
            <person name="Simmonds M."/>
            <person name="Skelton J."/>
            <person name="Squares R."/>
            <person name="Squares S."/>
            <person name="Stevens K."/>
            <person name="Taylor K."/>
            <person name="Whitehead S."/>
            <person name="Woodward J.R."/>
            <person name="Barrell B.G."/>
        </authorList>
    </citation>
    <scope>NUCLEOTIDE SEQUENCE [LARGE SCALE GENOMIC DNA]</scope>
    <source>
        <strain>TN</strain>
    </source>
</reference>
<protein>
    <recommendedName>
        <fullName>Phosphoglycerate kinase</fullName>
        <ecNumber>2.7.2.3</ecNumber>
    </recommendedName>
</protein>
<gene>
    <name type="primary">pgk</name>
    <name type="ordered locus">ML0571</name>
    <name type="ORF">B1496_C2_162</name>
</gene>
<keyword id="KW-0067">ATP-binding</keyword>
<keyword id="KW-0963">Cytoplasm</keyword>
<keyword id="KW-0324">Glycolysis</keyword>
<keyword id="KW-0418">Kinase</keyword>
<keyword id="KW-0547">Nucleotide-binding</keyword>
<keyword id="KW-1185">Reference proteome</keyword>
<keyword id="KW-0808">Transferase</keyword>
<organism>
    <name type="scientific">Mycobacterium leprae (strain TN)</name>
    <dbReference type="NCBI Taxonomy" id="272631"/>
    <lineage>
        <taxon>Bacteria</taxon>
        <taxon>Bacillati</taxon>
        <taxon>Actinomycetota</taxon>
        <taxon>Actinomycetes</taxon>
        <taxon>Mycobacteriales</taxon>
        <taxon>Mycobacteriaceae</taxon>
        <taxon>Mycobacterium</taxon>
    </lineage>
</organism>
<accession>P46712</accession>
<evidence type="ECO:0000250" key="1"/>
<evidence type="ECO:0000305" key="2"/>
<comment type="catalytic activity">
    <reaction>
        <text>(2R)-3-phosphoglycerate + ATP = (2R)-3-phospho-glyceroyl phosphate + ADP</text>
        <dbReference type="Rhea" id="RHEA:14801"/>
        <dbReference type="ChEBI" id="CHEBI:30616"/>
        <dbReference type="ChEBI" id="CHEBI:57604"/>
        <dbReference type="ChEBI" id="CHEBI:58272"/>
        <dbReference type="ChEBI" id="CHEBI:456216"/>
        <dbReference type="EC" id="2.7.2.3"/>
    </reaction>
</comment>
<comment type="pathway">
    <text>Carbohydrate degradation; glycolysis; pyruvate from D-glyceraldehyde 3-phosphate: step 2/5.</text>
</comment>
<comment type="subunit">
    <text evidence="1">Monomer.</text>
</comment>
<comment type="subcellular location">
    <subcellularLocation>
        <location evidence="2">Cytoplasm</location>
    </subcellularLocation>
</comment>
<comment type="similarity">
    <text evidence="2">Belongs to the phosphoglycerate kinase family.</text>
</comment>
<feature type="chain" id="PRO_0000145967" description="Phosphoglycerate kinase">
    <location>
        <begin position="1"/>
        <end position="416"/>
    </location>
</feature>
<feature type="binding site" evidence="1">
    <location>
        <begin position="24"/>
        <end position="26"/>
    </location>
    <ligand>
        <name>substrate</name>
    </ligand>
</feature>
<feature type="binding site" evidence="1">
    <location>
        <position position="40"/>
    </location>
    <ligand>
        <name>substrate</name>
    </ligand>
</feature>
<feature type="binding site" evidence="1">
    <location>
        <begin position="63"/>
        <end position="66"/>
    </location>
    <ligand>
        <name>substrate</name>
    </ligand>
</feature>
<feature type="binding site" evidence="1">
    <location>
        <position position="126"/>
    </location>
    <ligand>
        <name>substrate</name>
    </ligand>
</feature>
<feature type="binding site" evidence="1">
    <location>
        <position position="166"/>
    </location>
    <ligand>
        <name>substrate</name>
    </ligand>
</feature>
<feature type="binding site" evidence="1">
    <location>
        <position position="216"/>
    </location>
    <ligand>
        <name>ATP</name>
        <dbReference type="ChEBI" id="CHEBI:30616"/>
    </ligand>
</feature>
<feature type="binding site" evidence="1">
    <location>
        <position position="304"/>
    </location>
    <ligand>
        <name>ATP</name>
        <dbReference type="ChEBI" id="CHEBI:30616"/>
    </ligand>
</feature>
<feature type="binding site" evidence="1">
    <location>
        <position position="335"/>
    </location>
    <ligand>
        <name>ATP</name>
        <dbReference type="ChEBI" id="CHEBI:30616"/>
    </ligand>
</feature>
<feature type="binding site" evidence="1">
    <location>
        <begin position="364"/>
        <end position="367"/>
    </location>
    <ligand>
        <name>ATP</name>
        <dbReference type="ChEBI" id="CHEBI:30616"/>
    </ligand>
</feature>
<sequence>MRIPNLKDLLEEGVSGRCVLVRCDLNVPLGDDGAITDLGRVTASVPTLKALLEAGAKIVVAAHLGRPKNGPDPKLSLEPVAAALGEQLGQNVQLVCSTDRSPVGGDALACVERLTDGDLLLLQNIRFDPRETSKVDDERLALAKQLVELVGSAGAFVSDGFGVVHRRQASVYDVATLLPHYAGILVADEIRILEQLTSSAKRPYAVVLGGSKVSDKLGVIESLATKADSIVLGGGMCFTFLAAQGFSVGKSLLETEMIETCRSLLDTYADVLRLPMDIVVTEKFVADSPPQTVAADAIPDGLMGLDIGPESVKRFATLLSNASTIFWNGPMGVFEFPAYAAGTRGVAEAIVAVTGKGAFSVVGGGDSAAAMRALSLPEGSVSHLSTGGGASLEYLEGKTLPGIEVLGREQPRGGDS</sequence>
<name>PGK_MYCLE</name>
<proteinExistence type="inferred from homology"/>
<dbReference type="EC" id="2.7.2.3"/>
<dbReference type="EMBL" id="U00013">
    <property type="protein sequence ID" value="AAA17121.1"/>
    <property type="molecule type" value="Genomic_DNA"/>
</dbReference>
<dbReference type="EMBL" id="AL583919">
    <property type="protein sequence ID" value="CAC30079.1"/>
    <property type="molecule type" value="Genomic_DNA"/>
</dbReference>
<dbReference type="PIR" id="S72781">
    <property type="entry name" value="S72781"/>
</dbReference>
<dbReference type="RefSeq" id="NP_301483.1">
    <property type="nucleotide sequence ID" value="NC_002677.1"/>
</dbReference>
<dbReference type="RefSeq" id="WP_010907807.1">
    <property type="nucleotide sequence ID" value="NC_002677.1"/>
</dbReference>
<dbReference type="SMR" id="P46712"/>
<dbReference type="STRING" id="272631.gene:17574392"/>
<dbReference type="KEGG" id="mle:ML0571"/>
<dbReference type="PATRIC" id="fig|272631.5.peg.999"/>
<dbReference type="Leproma" id="ML0571"/>
<dbReference type="eggNOG" id="COG0126">
    <property type="taxonomic scope" value="Bacteria"/>
</dbReference>
<dbReference type="HOGENOM" id="CLU_025427_0_2_11"/>
<dbReference type="OrthoDB" id="9808460at2"/>
<dbReference type="UniPathway" id="UPA00109">
    <property type="reaction ID" value="UER00185"/>
</dbReference>
<dbReference type="Proteomes" id="UP000000806">
    <property type="component" value="Chromosome"/>
</dbReference>
<dbReference type="GO" id="GO:0005829">
    <property type="term" value="C:cytosol"/>
    <property type="evidence" value="ECO:0007669"/>
    <property type="project" value="TreeGrafter"/>
</dbReference>
<dbReference type="GO" id="GO:0043531">
    <property type="term" value="F:ADP binding"/>
    <property type="evidence" value="ECO:0007669"/>
    <property type="project" value="TreeGrafter"/>
</dbReference>
<dbReference type="GO" id="GO:0005524">
    <property type="term" value="F:ATP binding"/>
    <property type="evidence" value="ECO:0007669"/>
    <property type="project" value="UniProtKB-KW"/>
</dbReference>
<dbReference type="GO" id="GO:0004618">
    <property type="term" value="F:phosphoglycerate kinase activity"/>
    <property type="evidence" value="ECO:0007669"/>
    <property type="project" value="UniProtKB-UniRule"/>
</dbReference>
<dbReference type="GO" id="GO:0006094">
    <property type="term" value="P:gluconeogenesis"/>
    <property type="evidence" value="ECO:0007669"/>
    <property type="project" value="TreeGrafter"/>
</dbReference>
<dbReference type="GO" id="GO:0006096">
    <property type="term" value="P:glycolytic process"/>
    <property type="evidence" value="ECO:0007669"/>
    <property type="project" value="UniProtKB-UniRule"/>
</dbReference>
<dbReference type="CDD" id="cd00318">
    <property type="entry name" value="Phosphoglycerate_kinase"/>
    <property type="match status" value="1"/>
</dbReference>
<dbReference type="FunFam" id="3.40.50.1260:FF:000006">
    <property type="entry name" value="Phosphoglycerate kinase"/>
    <property type="match status" value="1"/>
</dbReference>
<dbReference type="FunFam" id="3.40.50.1260:FF:000031">
    <property type="entry name" value="Phosphoglycerate kinase 1"/>
    <property type="match status" value="1"/>
</dbReference>
<dbReference type="Gene3D" id="3.40.50.1260">
    <property type="entry name" value="Phosphoglycerate kinase, N-terminal domain"/>
    <property type="match status" value="2"/>
</dbReference>
<dbReference type="HAMAP" id="MF_00145">
    <property type="entry name" value="Phosphoglyc_kinase"/>
    <property type="match status" value="1"/>
</dbReference>
<dbReference type="InterPro" id="IPR001576">
    <property type="entry name" value="Phosphoglycerate_kinase"/>
</dbReference>
<dbReference type="InterPro" id="IPR015911">
    <property type="entry name" value="Phosphoglycerate_kinase_CS"/>
</dbReference>
<dbReference type="InterPro" id="IPR015824">
    <property type="entry name" value="Phosphoglycerate_kinase_N"/>
</dbReference>
<dbReference type="InterPro" id="IPR036043">
    <property type="entry name" value="Phosphoglycerate_kinase_sf"/>
</dbReference>
<dbReference type="PANTHER" id="PTHR11406">
    <property type="entry name" value="PHOSPHOGLYCERATE KINASE"/>
    <property type="match status" value="1"/>
</dbReference>
<dbReference type="PANTHER" id="PTHR11406:SF23">
    <property type="entry name" value="PHOSPHOGLYCERATE KINASE 1, CHLOROPLASTIC-RELATED"/>
    <property type="match status" value="1"/>
</dbReference>
<dbReference type="Pfam" id="PF00162">
    <property type="entry name" value="PGK"/>
    <property type="match status" value="1"/>
</dbReference>
<dbReference type="PIRSF" id="PIRSF000724">
    <property type="entry name" value="Pgk"/>
    <property type="match status" value="1"/>
</dbReference>
<dbReference type="PRINTS" id="PR00477">
    <property type="entry name" value="PHGLYCKINASE"/>
</dbReference>
<dbReference type="SUPFAM" id="SSF53748">
    <property type="entry name" value="Phosphoglycerate kinase"/>
    <property type="match status" value="1"/>
</dbReference>
<dbReference type="PROSITE" id="PS00111">
    <property type="entry name" value="PGLYCERATE_KINASE"/>
    <property type="match status" value="1"/>
</dbReference>